<reference key="1">
    <citation type="journal article" date="2009" name="PLoS ONE">
        <title>Genome sequence of the endosymbiont Rickettsia peacockii and comparison with virulent Rickettsia rickettsii: identification of virulence factors.</title>
        <authorList>
            <person name="Felsheim R.F."/>
            <person name="Kurtti T.J."/>
            <person name="Munderloh U.G."/>
        </authorList>
    </citation>
    <scope>NUCLEOTIDE SEQUENCE [LARGE SCALE GENOMIC DNA]</scope>
    <source>
        <strain>Rustic</strain>
    </source>
</reference>
<evidence type="ECO:0000255" key="1">
    <source>
        <dbReference type="HAMAP-Rule" id="MF_00111"/>
    </source>
</evidence>
<protein>
    <recommendedName>
        <fullName evidence="1">UDP-N-acetylglucosamine 1-carboxyvinyltransferase</fullName>
        <ecNumber evidence="1">2.5.1.7</ecNumber>
    </recommendedName>
    <alternativeName>
        <fullName evidence="1">Enoylpyruvate transferase</fullName>
    </alternativeName>
    <alternativeName>
        <fullName evidence="1">UDP-N-acetylglucosamine enolpyruvyl transferase</fullName>
        <shortName evidence="1">EPT</shortName>
    </alternativeName>
</protein>
<keyword id="KW-0131">Cell cycle</keyword>
<keyword id="KW-0132">Cell division</keyword>
<keyword id="KW-0133">Cell shape</keyword>
<keyword id="KW-0961">Cell wall biogenesis/degradation</keyword>
<keyword id="KW-0963">Cytoplasm</keyword>
<keyword id="KW-0573">Peptidoglycan synthesis</keyword>
<keyword id="KW-0670">Pyruvate</keyword>
<keyword id="KW-0808">Transferase</keyword>
<name>MURA_RICPU</name>
<dbReference type="EC" id="2.5.1.7" evidence="1"/>
<dbReference type="EMBL" id="CP001227">
    <property type="protein sequence ID" value="ACR47445.1"/>
    <property type="molecule type" value="Genomic_DNA"/>
</dbReference>
<dbReference type="RefSeq" id="WP_012736685.1">
    <property type="nucleotide sequence ID" value="NC_012730.1"/>
</dbReference>
<dbReference type="SMR" id="C4K1J4"/>
<dbReference type="KEGG" id="rpk:RPR_03515"/>
<dbReference type="HOGENOM" id="CLU_027387_0_0_5"/>
<dbReference type="UniPathway" id="UPA00219"/>
<dbReference type="Proteomes" id="UP000005015">
    <property type="component" value="Chromosome"/>
</dbReference>
<dbReference type="GO" id="GO:0005737">
    <property type="term" value="C:cytoplasm"/>
    <property type="evidence" value="ECO:0007669"/>
    <property type="project" value="UniProtKB-SubCell"/>
</dbReference>
<dbReference type="GO" id="GO:0008760">
    <property type="term" value="F:UDP-N-acetylglucosamine 1-carboxyvinyltransferase activity"/>
    <property type="evidence" value="ECO:0007669"/>
    <property type="project" value="UniProtKB-UniRule"/>
</dbReference>
<dbReference type="GO" id="GO:0051301">
    <property type="term" value="P:cell division"/>
    <property type="evidence" value="ECO:0007669"/>
    <property type="project" value="UniProtKB-KW"/>
</dbReference>
<dbReference type="GO" id="GO:0071555">
    <property type="term" value="P:cell wall organization"/>
    <property type="evidence" value="ECO:0007669"/>
    <property type="project" value="UniProtKB-KW"/>
</dbReference>
<dbReference type="GO" id="GO:0009252">
    <property type="term" value="P:peptidoglycan biosynthetic process"/>
    <property type="evidence" value="ECO:0007669"/>
    <property type="project" value="UniProtKB-UniRule"/>
</dbReference>
<dbReference type="GO" id="GO:0008360">
    <property type="term" value="P:regulation of cell shape"/>
    <property type="evidence" value="ECO:0007669"/>
    <property type="project" value="UniProtKB-KW"/>
</dbReference>
<dbReference type="GO" id="GO:0019277">
    <property type="term" value="P:UDP-N-acetylgalactosamine biosynthetic process"/>
    <property type="evidence" value="ECO:0007669"/>
    <property type="project" value="InterPro"/>
</dbReference>
<dbReference type="CDD" id="cd01555">
    <property type="entry name" value="UdpNAET"/>
    <property type="match status" value="1"/>
</dbReference>
<dbReference type="FunFam" id="3.65.10.10:FF:000001">
    <property type="entry name" value="UDP-N-acetylglucosamine 1-carboxyvinyltransferase"/>
    <property type="match status" value="1"/>
</dbReference>
<dbReference type="Gene3D" id="3.65.10.10">
    <property type="entry name" value="Enolpyruvate transferase domain"/>
    <property type="match status" value="2"/>
</dbReference>
<dbReference type="HAMAP" id="MF_00111">
    <property type="entry name" value="MurA"/>
    <property type="match status" value="1"/>
</dbReference>
<dbReference type="InterPro" id="IPR001986">
    <property type="entry name" value="Enolpyruvate_Tfrase_dom"/>
</dbReference>
<dbReference type="InterPro" id="IPR036968">
    <property type="entry name" value="Enolpyruvate_Tfrase_sf"/>
</dbReference>
<dbReference type="InterPro" id="IPR050068">
    <property type="entry name" value="MurA_subfamily"/>
</dbReference>
<dbReference type="InterPro" id="IPR013792">
    <property type="entry name" value="RNA3'P_cycl/enolpyr_Trfase_a/b"/>
</dbReference>
<dbReference type="InterPro" id="IPR005750">
    <property type="entry name" value="UDP_GlcNAc_COvinyl_MurA"/>
</dbReference>
<dbReference type="NCBIfam" id="TIGR01072">
    <property type="entry name" value="murA"/>
    <property type="match status" value="1"/>
</dbReference>
<dbReference type="NCBIfam" id="NF006873">
    <property type="entry name" value="PRK09369.1"/>
    <property type="match status" value="1"/>
</dbReference>
<dbReference type="PANTHER" id="PTHR43783">
    <property type="entry name" value="UDP-N-ACETYLGLUCOSAMINE 1-CARBOXYVINYLTRANSFERASE"/>
    <property type="match status" value="1"/>
</dbReference>
<dbReference type="PANTHER" id="PTHR43783:SF1">
    <property type="entry name" value="UDP-N-ACETYLGLUCOSAMINE 1-CARBOXYVINYLTRANSFERASE"/>
    <property type="match status" value="1"/>
</dbReference>
<dbReference type="Pfam" id="PF00275">
    <property type="entry name" value="EPSP_synthase"/>
    <property type="match status" value="1"/>
</dbReference>
<dbReference type="SUPFAM" id="SSF55205">
    <property type="entry name" value="EPT/RTPC-like"/>
    <property type="match status" value="1"/>
</dbReference>
<comment type="function">
    <text evidence="1">Cell wall formation. Adds enolpyruvyl to UDP-N-acetylglucosamine.</text>
</comment>
<comment type="catalytic activity">
    <reaction evidence="1">
        <text>phosphoenolpyruvate + UDP-N-acetyl-alpha-D-glucosamine = UDP-N-acetyl-3-O-(1-carboxyvinyl)-alpha-D-glucosamine + phosphate</text>
        <dbReference type="Rhea" id="RHEA:18681"/>
        <dbReference type="ChEBI" id="CHEBI:43474"/>
        <dbReference type="ChEBI" id="CHEBI:57705"/>
        <dbReference type="ChEBI" id="CHEBI:58702"/>
        <dbReference type="ChEBI" id="CHEBI:68483"/>
        <dbReference type="EC" id="2.5.1.7"/>
    </reaction>
</comment>
<comment type="pathway">
    <text evidence="1">Cell wall biogenesis; peptidoglycan biosynthesis.</text>
</comment>
<comment type="subcellular location">
    <subcellularLocation>
        <location evidence="1">Cytoplasm</location>
    </subcellularLocation>
</comment>
<comment type="similarity">
    <text evidence="1">Belongs to the EPSP synthase family. MurA subfamily.</text>
</comment>
<organism>
    <name type="scientific">Rickettsia peacockii (strain Rustic)</name>
    <dbReference type="NCBI Taxonomy" id="562019"/>
    <lineage>
        <taxon>Bacteria</taxon>
        <taxon>Pseudomonadati</taxon>
        <taxon>Pseudomonadota</taxon>
        <taxon>Alphaproteobacteria</taxon>
        <taxon>Rickettsiales</taxon>
        <taxon>Rickettsiaceae</taxon>
        <taxon>Rickettsieae</taxon>
        <taxon>Rickettsia</taxon>
        <taxon>spotted fever group</taxon>
    </lineage>
</organism>
<sequence length="419" mass="45305">MHKLIIHGGTPLKGSINISGAKNAVLPIMAASILTDKLHITNVPKLTDVSTMKDLLRSHGADIEIIEHQDEFELIIDTKNINNFTADYEIVRKMRASIWVLGPLLTKYGKAKVSLPGGCAIGARQVDLHIAVLKAMGAEIEIEDGYINASSKGRLKGPHFVFDKVSVGATINAILAAVLAEGETVLFNCGREPEIVDLCNCLITMGADIAGIGTSEITIKGKDSLNKASYKVLSDRIEAGTYMFAAAITKGDVKICGIDYHIVENIALKLIETGIKVVPINNGVQVTYEGKLNSVDLETNPYPGFATDLQAQFMSLMTLSSGVSMITENIFENRFMHVPELCRMGADIVVRGNKAVVRGVEMLKGAEVMASDLRASVSLILAGLSTNSKTVLHRIYHLDRGFQDLEKKLSNCGADIKRV</sequence>
<gene>
    <name evidence="1" type="primary">murA</name>
    <name type="ordered locus">RPR_03515</name>
</gene>
<proteinExistence type="inferred from homology"/>
<accession>C4K1J4</accession>
<feature type="chain" id="PRO_1000202934" description="UDP-N-acetylglucosamine 1-carboxyvinyltransferase">
    <location>
        <begin position="1"/>
        <end position="419"/>
    </location>
</feature>
<feature type="active site" description="Proton donor" evidence="1">
    <location>
        <position position="119"/>
    </location>
</feature>
<feature type="binding site" evidence="1">
    <location>
        <begin position="22"/>
        <end position="23"/>
    </location>
    <ligand>
        <name>phosphoenolpyruvate</name>
        <dbReference type="ChEBI" id="CHEBI:58702"/>
    </ligand>
</feature>
<feature type="binding site" evidence="1">
    <location>
        <position position="95"/>
    </location>
    <ligand>
        <name>UDP-N-acetyl-alpha-D-glucosamine</name>
        <dbReference type="ChEBI" id="CHEBI:57705"/>
    </ligand>
</feature>
<feature type="binding site" evidence="1">
    <location>
        <begin position="164"/>
        <end position="167"/>
    </location>
    <ligand>
        <name>UDP-N-acetyl-alpha-D-glucosamine</name>
        <dbReference type="ChEBI" id="CHEBI:57705"/>
    </ligand>
</feature>
<feature type="binding site" evidence="1">
    <location>
        <position position="308"/>
    </location>
    <ligand>
        <name>UDP-N-acetyl-alpha-D-glucosamine</name>
        <dbReference type="ChEBI" id="CHEBI:57705"/>
    </ligand>
</feature>
<feature type="binding site" evidence="1">
    <location>
        <position position="330"/>
    </location>
    <ligand>
        <name>UDP-N-acetyl-alpha-D-glucosamine</name>
        <dbReference type="ChEBI" id="CHEBI:57705"/>
    </ligand>
</feature>
<feature type="modified residue" description="2-(S-cysteinyl)pyruvic acid O-phosphothioketal" evidence="1">
    <location>
        <position position="119"/>
    </location>
</feature>